<name>HSCB_NEIM0</name>
<organism>
    <name type="scientific">Neisseria meningitidis serogroup C (strain 053442)</name>
    <dbReference type="NCBI Taxonomy" id="374833"/>
    <lineage>
        <taxon>Bacteria</taxon>
        <taxon>Pseudomonadati</taxon>
        <taxon>Pseudomonadota</taxon>
        <taxon>Betaproteobacteria</taxon>
        <taxon>Neisseriales</taxon>
        <taxon>Neisseriaceae</taxon>
        <taxon>Neisseria</taxon>
    </lineage>
</organism>
<evidence type="ECO:0000255" key="1">
    <source>
        <dbReference type="HAMAP-Rule" id="MF_00682"/>
    </source>
</evidence>
<reference key="1">
    <citation type="journal article" date="2008" name="Genomics">
        <title>Characterization of ST-4821 complex, a unique Neisseria meningitidis clone.</title>
        <authorList>
            <person name="Peng J."/>
            <person name="Yang L."/>
            <person name="Yang F."/>
            <person name="Yang J."/>
            <person name="Yan Y."/>
            <person name="Nie H."/>
            <person name="Zhang X."/>
            <person name="Xiong Z."/>
            <person name="Jiang Y."/>
            <person name="Cheng F."/>
            <person name="Xu X."/>
            <person name="Chen S."/>
            <person name="Sun L."/>
            <person name="Li W."/>
            <person name="Shen Y."/>
            <person name="Shao Z."/>
            <person name="Liang X."/>
            <person name="Xu J."/>
            <person name="Jin Q."/>
        </authorList>
    </citation>
    <scope>NUCLEOTIDE SEQUENCE [LARGE SCALE GENOMIC DNA]</scope>
    <source>
        <strain>053442</strain>
    </source>
</reference>
<accession>A9M033</accession>
<proteinExistence type="inferred from homology"/>
<dbReference type="EMBL" id="CP000381">
    <property type="protein sequence ID" value="ABX73469.1"/>
    <property type="molecule type" value="Genomic_DNA"/>
</dbReference>
<dbReference type="RefSeq" id="WP_002219110.1">
    <property type="nucleotide sequence ID" value="NC_010120.1"/>
</dbReference>
<dbReference type="SMR" id="A9M033"/>
<dbReference type="GeneID" id="83616005"/>
<dbReference type="KEGG" id="nmn:NMCC_1297"/>
<dbReference type="HOGENOM" id="CLU_068529_2_0_4"/>
<dbReference type="Proteomes" id="UP000001177">
    <property type="component" value="Chromosome"/>
</dbReference>
<dbReference type="GO" id="GO:1990230">
    <property type="term" value="C:iron-sulfur cluster transfer complex"/>
    <property type="evidence" value="ECO:0007669"/>
    <property type="project" value="TreeGrafter"/>
</dbReference>
<dbReference type="GO" id="GO:0001671">
    <property type="term" value="F:ATPase activator activity"/>
    <property type="evidence" value="ECO:0007669"/>
    <property type="project" value="InterPro"/>
</dbReference>
<dbReference type="GO" id="GO:0051087">
    <property type="term" value="F:protein-folding chaperone binding"/>
    <property type="evidence" value="ECO:0007669"/>
    <property type="project" value="InterPro"/>
</dbReference>
<dbReference type="GO" id="GO:0044571">
    <property type="term" value="P:[2Fe-2S] cluster assembly"/>
    <property type="evidence" value="ECO:0007669"/>
    <property type="project" value="InterPro"/>
</dbReference>
<dbReference type="GO" id="GO:0051259">
    <property type="term" value="P:protein complex oligomerization"/>
    <property type="evidence" value="ECO:0007669"/>
    <property type="project" value="InterPro"/>
</dbReference>
<dbReference type="GO" id="GO:0006457">
    <property type="term" value="P:protein folding"/>
    <property type="evidence" value="ECO:0007669"/>
    <property type="project" value="UniProtKB-UniRule"/>
</dbReference>
<dbReference type="CDD" id="cd06257">
    <property type="entry name" value="DnaJ"/>
    <property type="match status" value="1"/>
</dbReference>
<dbReference type="FunFam" id="1.10.287.110:FF:000088">
    <property type="entry name" value="Co-chaperone protein HscB homolog"/>
    <property type="match status" value="1"/>
</dbReference>
<dbReference type="FunFam" id="1.20.1280.20:FF:000004">
    <property type="entry name" value="Co-chaperone protein HscB homolog"/>
    <property type="match status" value="1"/>
</dbReference>
<dbReference type="Gene3D" id="1.10.287.110">
    <property type="entry name" value="DnaJ domain"/>
    <property type="match status" value="1"/>
</dbReference>
<dbReference type="Gene3D" id="1.20.1280.20">
    <property type="entry name" value="HscB, C-terminal domain"/>
    <property type="match status" value="1"/>
</dbReference>
<dbReference type="HAMAP" id="MF_00682">
    <property type="entry name" value="HscB"/>
    <property type="match status" value="1"/>
</dbReference>
<dbReference type="InterPro" id="IPR001623">
    <property type="entry name" value="DnaJ_domain"/>
</dbReference>
<dbReference type="InterPro" id="IPR004640">
    <property type="entry name" value="HscB"/>
</dbReference>
<dbReference type="InterPro" id="IPR036386">
    <property type="entry name" value="HscB_C_sf"/>
</dbReference>
<dbReference type="InterPro" id="IPR009073">
    <property type="entry name" value="HscB_oligo_C"/>
</dbReference>
<dbReference type="InterPro" id="IPR036869">
    <property type="entry name" value="J_dom_sf"/>
</dbReference>
<dbReference type="NCBIfam" id="TIGR00714">
    <property type="entry name" value="hscB"/>
    <property type="match status" value="1"/>
</dbReference>
<dbReference type="PANTHER" id="PTHR14021">
    <property type="entry name" value="IRON-SULFUR CLUSTER CO-CHAPERONE PROTEIN HSCB"/>
    <property type="match status" value="1"/>
</dbReference>
<dbReference type="PANTHER" id="PTHR14021:SF15">
    <property type="entry name" value="IRON-SULFUR CLUSTER CO-CHAPERONE PROTEIN HSCB"/>
    <property type="match status" value="1"/>
</dbReference>
<dbReference type="Pfam" id="PF00226">
    <property type="entry name" value="DnaJ"/>
    <property type="match status" value="1"/>
</dbReference>
<dbReference type="Pfam" id="PF07743">
    <property type="entry name" value="HSCB_C"/>
    <property type="match status" value="1"/>
</dbReference>
<dbReference type="SMART" id="SM00271">
    <property type="entry name" value="DnaJ"/>
    <property type="match status" value="1"/>
</dbReference>
<dbReference type="SUPFAM" id="SSF46565">
    <property type="entry name" value="Chaperone J-domain"/>
    <property type="match status" value="1"/>
</dbReference>
<dbReference type="SUPFAM" id="SSF47144">
    <property type="entry name" value="HSC20 (HSCB), C-terminal oligomerisation domain"/>
    <property type="match status" value="1"/>
</dbReference>
<dbReference type="PROSITE" id="PS50076">
    <property type="entry name" value="DNAJ_2"/>
    <property type="match status" value="1"/>
</dbReference>
<comment type="function">
    <text evidence="1">Co-chaperone involved in the maturation of iron-sulfur cluster-containing proteins. Seems to help targeting proteins to be folded toward HscA.</text>
</comment>
<comment type="subunit">
    <text evidence="1">Interacts with HscA and stimulates its ATPase activity.</text>
</comment>
<comment type="similarity">
    <text evidence="1">Belongs to the HscB family.</text>
</comment>
<protein>
    <recommendedName>
        <fullName evidence="1">Co-chaperone protein HscB homolog</fullName>
    </recommendedName>
</protein>
<gene>
    <name evidence="1" type="primary">hscB</name>
    <name type="ordered locus">NMCC_1297</name>
</gene>
<keyword id="KW-0143">Chaperone</keyword>
<sequence>MSQYFTLFRIEPAFDIDTENLEQTYRALAARFHPDKFASASAFEQKQAVMMSSTINDAYRTLKNPIDRAAYLLKTSGIDADAPEHTAFAPEFLMQQMEWRETLMEARAGNDLESLKNLDNEIRDEQEKLFCGLKQSFARQDYDTAAQQVRQGRFLDKLRNEISSAL</sequence>
<feature type="chain" id="PRO_1000083014" description="Co-chaperone protein HscB homolog">
    <location>
        <begin position="1"/>
        <end position="166"/>
    </location>
</feature>
<feature type="domain" description="J" evidence="1">
    <location>
        <begin position="3"/>
        <end position="75"/>
    </location>
</feature>